<dbReference type="EC" id="3.4.21.-"/>
<dbReference type="EMBL" id="CP000002">
    <property type="protein sequence ID" value="AAU23370.1"/>
    <property type="molecule type" value="Genomic_DNA"/>
</dbReference>
<dbReference type="EMBL" id="AE017333">
    <property type="protein sequence ID" value="AAU40730.1"/>
    <property type="molecule type" value="Genomic_DNA"/>
</dbReference>
<dbReference type="RefSeq" id="WP_003181752.1">
    <property type="nucleotide sequence ID" value="NC_006322.1"/>
</dbReference>
<dbReference type="SMR" id="Q65JN4"/>
<dbReference type="STRING" id="279010.BL01278"/>
<dbReference type="MEROPS" id="T01.007"/>
<dbReference type="GeneID" id="92861572"/>
<dbReference type="KEGG" id="bld:BLi01835"/>
<dbReference type="KEGG" id="bli:BL01278"/>
<dbReference type="eggNOG" id="COG5405">
    <property type="taxonomic scope" value="Bacteria"/>
</dbReference>
<dbReference type="HOGENOM" id="CLU_093872_1_0_9"/>
<dbReference type="Proteomes" id="UP000000606">
    <property type="component" value="Chromosome"/>
</dbReference>
<dbReference type="GO" id="GO:0009376">
    <property type="term" value="C:HslUV protease complex"/>
    <property type="evidence" value="ECO:0007669"/>
    <property type="project" value="UniProtKB-UniRule"/>
</dbReference>
<dbReference type="GO" id="GO:0005839">
    <property type="term" value="C:proteasome core complex"/>
    <property type="evidence" value="ECO:0007669"/>
    <property type="project" value="InterPro"/>
</dbReference>
<dbReference type="GO" id="GO:0046872">
    <property type="term" value="F:metal ion binding"/>
    <property type="evidence" value="ECO:0007669"/>
    <property type="project" value="UniProtKB-KW"/>
</dbReference>
<dbReference type="GO" id="GO:0008236">
    <property type="term" value="F:serine-type peptidase activity"/>
    <property type="evidence" value="ECO:0007669"/>
    <property type="project" value="UniProtKB-KW"/>
</dbReference>
<dbReference type="GO" id="GO:0004298">
    <property type="term" value="F:threonine-type endopeptidase activity"/>
    <property type="evidence" value="ECO:0007669"/>
    <property type="project" value="InterPro"/>
</dbReference>
<dbReference type="GO" id="GO:0051603">
    <property type="term" value="P:proteolysis involved in protein catabolic process"/>
    <property type="evidence" value="ECO:0007669"/>
    <property type="project" value="InterPro"/>
</dbReference>
<dbReference type="CDD" id="cd01913">
    <property type="entry name" value="protease_HslV"/>
    <property type="match status" value="1"/>
</dbReference>
<dbReference type="Gene3D" id="3.60.20.10">
    <property type="entry name" value="Glutamine Phosphoribosylpyrophosphate, subunit 1, domain 1"/>
    <property type="match status" value="1"/>
</dbReference>
<dbReference type="HAMAP" id="MF_00248">
    <property type="entry name" value="HslV"/>
    <property type="match status" value="1"/>
</dbReference>
<dbReference type="InterPro" id="IPR022281">
    <property type="entry name" value="ATP-dep_Prtase_HsIV_su"/>
</dbReference>
<dbReference type="InterPro" id="IPR029055">
    <property type="entry name" value="Ntn_hydrolases_N"/>
</dbReference>
<dbReference type="InterPro" id="IPR001353">
    <property type="entry name" value="Proteasome_sua/b"/>
</dbReference>
<dbReference type="InterPro" id="IPR023333">
    <property type="entry name" value="Proteasome_suB-type"/>
</dbReference>
<dbReference type="NCBIfam" id="TIGR03692">
    <property type="entry name" value="ATP_dep_HslV"/>
    <property type="match status" value="1"/>
</dbReference>
<dbReference type="NCBIfam" id="NF003964">
    <property type="entry name" value="PRK05456.1"/>
    <property type="match status" value="1"/>
</dbReference>
<dbReference type="PANTHER" id="PTHR32194:SF0">
    <property type="entry name" value="ATP-DEPENDENT PROTEASE SUBUNIT HSLV"/>
    <property type="match status" value="1"/>
</dbReference>
<dbReference type="PANTHER" id="PTHR32194">
    <property type="entry name" value="METALLOPROTEASE TLDD"/>
    <property type="match status" value="1"/>
</dbReference>
<dbReference type="Pfam" id="PF00227">
    <property type="entry name" value="Proteasome"/>
    <property type="match status" value="1"/>
</dbReference>
<dbReference type="PIRSF" id="PIRSF039093">
    <property type="entry name" value="HslV"/>
    <property type="match status" value="1"/>
</dbReference>
<dbReference type="SUPFAM" id="SSF56235">
    <property type="entry name" value="N-terminal nucleophile aminohydrolases (Ntn hydrolases)"/>
    <property type="match status" value="1"/>
</dbReference>
<dbReference type="PROSITE" id="PS51476">
    <property type="entry name" value="PROTEASOME_BETA_2"/>
    <property type="match status" value="1"/>
</dbReference>
<comment type="function">
    <text evidence="1">Protease subunit of a proteasome-like degradation complex.</text>
</comment>
<comment type="subunit">
    <text evidence="1">A double ring-shaped homohexamer of ClpQ is capped on each side by a ring-shaped ClpY homohexamer. The assembly of the ClpQ/ClpY complex is dependent on binding of ATP (By similarity).</text>
</comment>
<comment type="subcellular location">
    <subcellularLocation>
        <location evidence="1">Cytoplasm</location>
    </subcellularLocation>
</comment>
<comment type="similarity">
    <text evidence="2">Belongs to the peptidase T1B family. HslV subfamily.</text>
</comment>
<proteinExistence type="inferred from homology"/>
<protein>
    <recommendedName>
        <fullName>ATP-dependent protease subunit ClpQ</fullName>
        <ecNumber>3.4.21.-</ecNumber>
    </recommendedName>
</protein>
<gene>
    <name type="primary">clpQ</name>
    <name type="synonym">hslV</name>
    <name type="ordered locus">BLi01835</name>
    <name type="ordered locus">BL01278</name>
</gene>
<sequence>MSSFHATTIFAVQHNGKSAMAGDGQVTFGQAVVMKHTARKVRKLFNGKVIAGFAGSVADAFTLFEMFEAKLEEYNGNLQRAAVELAKEWRSDKVLRKLEAMLIVMNADSMLLVSGTGEVIEPDDGILAIGSGGNYALAAGRALKRHAGSQLDAKAIARASLETAGEICVYTNDQIIVEELE</sequence>
<name>CLPQ_BACLD</name>
<feature type="initiator methionine" description="Removed" evidence="1">
    <location>
        <position position="1"/>
    </location>
</feature>
<feature type="chain" id="PRO_1000012579" description="ATP-dependent protease subunit ClpQ">
    <location>
        <begin position="2"/>
        <end position="181"/>
    </location>
</feature>
<feature type="active site" evidence="1">
    <location>
        <position position="2"/>
    </location>
</feature>
<feature type="binding site" evidence="1">
    <location>
        <position position="165"/>
    </location>
    <ligand>
        <name>Na(+)</name>
        <dbReference type="ChEBI" id="CHEBI:29101"/>
    </ligand>
</feature>
<feature type="binding site" evidence="1">
    <location>
        <position position="168"/>
    </location>
    <ligand>
        <name>Na(+)</name>
        <dbReference type="ChEBI" id="CHEBI:29101"/>
    </ligand>
</feature>
<feature type="binding site" evidence="1">
    <location>
        <position position="171"/>
    </location>
    <ligand>
        <name>Na(+)</name>
        <dbReference type="ChEBI" id="CHEBI:29101"/>
    </ligand>
</feature>
<accession>Q65JN4</accession>
<accession>Q62V39</accession>
<organism>
    <name type="scientific">Bacillus licheniformis (strain ATCC 14580 / DSM 13 / JCM 2505 / CCUG 7422 / NBRC 12200 / NCIMB 9375 / NCTC 10341 / NRRL NRS-1264 / Gibson 46)</name>
    <dbReference type="NCBI Taxonomy" id="279010"/>
    <lineage>
        <taxon>Bacteria</taxon>
        <taxon>Bacillati</taxon>
        <taxon>Bacillota</taxon>
        <taxon>Bacilli</taxon>
        <taxon>Bacillales</taxon>
        <taxon>Bacillaceae</taxon>
        <taxon>Bacillus</taxon>
    </lineage>
</organism>
<evidence type="ECO:0000250" key="1"/>
<evidence type="ECO:0000305" key="2"/>
<reference key="1">
    <citation type="journal article" date="2004" name="J. Mol. Microbiol. Biotechnol.">
        <title>The complete genome sequence of Bacillus licheniformis DSM13, an organism with great industrial potential.</title>
        <authorList>
            <person name="Veith B."/>
            <person name="Herzberg C."/>
            <person name="Steckel S."/>
            <person name="Feesche J."/>
            <person name="Maurer K.H."/>
            <person name="Ehrenreich P."/>
            <person name="Baeumer S."/>
            <person name="Henne A."/>
            <person name="Liesegang H."/>
            <person name="Merkl R."/>
            <person name="Ehrenreich A."/>
            <person name="Gottschalk G."/>
        </authorList>
    </citation>
    <scope>NUCLEOTIDE SEQUENCE [LARGE SCALE GENOMIC DNA]</scope>
    <source>
        <strain>ATCC 14580 / DSM 13 / JCM 2505 / CCUG 7422 / NBRC 12200 / NCIMB 9375 / NCTC 10341 / NRRL NRS-1264 / Gibson 46</strain>
    </source>
</reference>
<reference key="2">
    <citation type="journal article" date="2004" name="Genome Biol.">
        <title>Complete genome sequence of the industrial bacterium Bacillus licheniformis and comparisons with closely related Bacillus species.</title>
        <authorList>
            <person name="Rey M.W."/>
            <person name="Ramaiya P."/>
            <person name="Nelson B.A."/>
            <person name="Brody-Karpin S.D."/>
            <person name="Zaretsky E.J."/>
            <person name="Tang M."/>
            <person name="Lopez de Leon A."/>
            <person name="Xiang H."/>
            <person name="Gusti V."/>
            <person name="Clausen I.G."/>
            <person name="Olsen P.B."/>
            <person name="Rasmussen M.D."/>
            <person name="Andersen J.T."/>
            <person name="Joergensen P.L."/>
            <person name="Larsen T.S."/>
            <person name="Sorokin A."/>
            <person name="Bolotin A."/>
            <person name="Lapidus A."/>
            <person name="Galleron N."/>
            <person name="Ehrlich S.D."/>
            <person name="Berka R.M."/>
        </authorList>
    </citation>
    <scope>NUCLEOTIDE SEQUENCE [LARGE SCALE GENOMIC DNA]</scope>
    <source>
        <strain>ATCC 14580 / DSM 13 / JCM 2505 / CCUG 7422 / NBRC 12200 / NCIMB 9375 / NCTC 10341 / NRRL NRS-1264 / Gibson 46</strain>
    </source>
</reference>
<keyword id="KW-0963">Cytoplasm</keyword>
<keyword id="KW-0378">Hydrolase</keyword>
<keyword id="KW-0479">Metal-binding</keyword>
<keyword id="KW-0645">Protease</keyword>
<keyword id="KW-1185">Reference proteome</keyword>
<keyword id="KW-0720">Serine protease</keyword>
<keyword id="KW-0915">Sodium</keyword>